<keyword id="KW-0067">ATP-binding</keyword>
<keyword id="KW-0173">Coenzyme A biosynthesis</keyword>
<keyword id="KW-0963">Cytoplasm</keyword>
<keyword id="KW-0460">Magnesium</keyword>
<keyword id="KW-0547">Nucleotide-binding</keyword>
<keyword id="KW-0548">Nucleotidyltransferase</keyword>
<keyword id="KW-0808">Transferase</keyword>
<reference key="1">
    <citation type="submission" date="2008-01" db="EMBL/GenBank/DDBJ databases">
        <title>Complete sequence of Pseudomonas putida GB-1.</title>
        <authorList>
            <consortium name="US DOE Joint Genome Institute"/>
            <person name="Copeland A."/>
            <person name="Lucas S."/>
            <person name="Lapidus A."/>
            <person name="Barry K."/>
            <person name="Glavina del Rio T."/>
            <person name="Dalin E."/>
            <person name="Tice H."/>
            <person name="Pitluck S."/>
            <person name="Bruce D."/>
            <person name="Goodwin L."/>
            <person name="Chertkov O."/>
            <person name="Brettin T."/>
            <person name="Detter J.C."/>
            <person name="Han C."/>
            <person name="Kuske C.R."/>
            <person name="Schmutz J."/>
            <person name="Larimer F."/>
            <person name="Land M."/>
            <person name="Hauser L."/>
            <person name="Kyrpides N."/>
            <person name="Kim E."/>
            <person name="McCarthy J.K."/>
            <person name="Richardson P."/>
        </authorList>
    </citation>
    <scope>NUCLEOTIDE SEQUENCE [LARGE SCALE GENOMIC DNA]</scope>
    <source>
        <strain>GB-1</strain>
    </source>
</reference>
<sequence length="159" mass="17750">MNRVLYPGTFDPITKGHGDLVERASRLFDHVIIAVAASPKKNPLFPLEQRVALAREVTKHLPNVEVIGFSSLLAHFAKEQGANVFLRGLRAVSDFEYEFQLANMNRQLAPDVESLFLTPSERYSFISSTLVREIAALGGDITKFVHPVVADALTERFKK</sequence>
<protein>
    <recommendedName>
        <fullName evidence="1">Phosphopantetheine adenylyltransferase</fullName>
        <ecNumber evidence="1">2.7.7.3</ecNumber>
    </recommendedName>
    <alternativeName>
        <fullName evidence="1">Dephospho-CoA pyrophosphorylase</fullName>
    </alternativeName>
    <alternativeName>
        <fullName evidence="1">Pantetheine-phosphate adenylyltransferase</fullName>
        <shortName evidence="1">PPAT</shortName>
    </alternativeName>
</protein>
<organism>
    <name type="scientific">Pseudomonas putida (strain GB-1)</name>
    <dbReference type="NCBI Taxonomy" id="76869"/>
    <lineage>
        <taxon>Bacteria</taxon>
        <taxon>Pseudomonadati</taxon>
        <taxon>Pseudomonadota</taxon>
        <taxon>Gammaproteobacteria</taxon>
        <taxon>Pseudomonadales</taxon>
        <taxon>Pseudomonadaceae</taxon>
        <taxon>Pseudomonas</taxon>
    </lineage>
</organism>
<comment type="function">
    <text evidence="1">Reversibly transfers an adenylyl group from ATP to 4'-phosphopantetheine, yielding dephospho-CoA (dPCoA) and pyrophosphate.</text>
</comment>
<comment type="catalytic activity">
    <reaction evidence="1">
        <text>(R)-4'-phosphopantetheine + ATP + H(+) = 3'-dephospho-CoA + diphosphate</text>
        <dbReference type="Rhea" id="RHEA:19801"/>
        <dbReference type="ChEBI" id="CHEBI:15378"/>
        <dbReference type="ChEBI" id="CHEBI:30616"/>
        <dbReference type="ChEBI" id="CHEBI:33019"/>
        <dbReference type="ChEBI" id="CHEBI:57328"/>
        <dbReference type="ChEBI" id="CHEBI:61723"/>
        <dbReference type="EC" id="2.7.7.3"/>
    </reaction>
</comment>
<comment type="cofactor">
    <cofactor evidence="1">
        <name>Mg(2+)</name>
        <dbReference type="ChEBI" id="CHEBI:18420"/>
    </cofactor>
</comment>
<comment type="pathway">
    <text evidence="1">Cofactor biosynthesis; coenzyme A biosynthesis; CoA from (R)-pantothenate: step 4/5.</text>
</comment>
<comment type="subunit">
    <text evidence="1">Homohexamer.</text>
</comment>
<comment type="subcellular location">
    <subcellularLocation>
        <location evidence="1">Cytoplasm</location>
    </subcellularLocation>
</comment>
<comment type="similarity">
    <text evidence="1">Belongs to the bacterial CoaD family.</text>
</comment>
<feature type="chain" id="PRO_1000076776" description="Phosphopantetheine adenylyltransferase">
    <location>
        <begin position="1"/>
        <end position="159"/>
    </location>
</feature>
<feature type="binding site" evidence="1">
    <location>
        <begin position="9"/>
        <end position="10"/>
    </location>
    <ligand>
        <name>ATP</name>
        <dbReference type="ChEBI" id="CHEBI:30616"/>
    </ligand>
</feature>
<feature type="binding site" evidence="1">
    <location>
        <position position="9"/>
    </location>
    <ligand>
        <name>substrate</name>
    </ligand>
</feature>
<feature type="binding site" evidence="1">
    <location>
        <position position="17"/>
    </location>
    <ligand>
        <name>ATP</name>
        <dbReference type="ChEBI" id="CHEBI:30616"/>
    </ligand>
</feature>
<feature type="binding site" evidence="1">
    <location>
        <position position="41"/>
    </location>
    <ligand>
        <name>substrate</name>
    </ligand>
</feature>
<feature type="binding site" evidence="1">
    <location>
        <position position="73"/>
    </location>
    <ligand>
        <name>substrate</name>
    </ligand>
</feature>
<feature type="binding site" evidence="1">
    <location>
        <position position="87"/>
    </location>
    <ligand>
        <name>substrate</name>
    </ligand>
</feature>
<feature type="binding site" evidence="1">
    <location>
        <begin position="88"/>
        <end position="90"/>
    </location>
    <ligand>
        <name>ATP</name>
        <dbReference type="ChEBI" id="CHEBI:30616"/>
    </ligand>
</feature>
<feature type="binding site" evidence="1">
    <location>
        <position position="98"/>
    </location>
    <ligand>
        <name>ATP</name>
        <dbReference type="ChEBI" id="CHEBI:30616"/>
    </ligand>
</feature>
<feature type="binding site" evidence="1">
    <location>
        <begin position="123"/>
        <end position="129"/>
    </location>
    <ligand>
        <name>ATP</name>
        <dbReference type="ChEBI" id="CHEBI:30616"/>
    </ligand>
</feature>
<feature type="site" description="Transition state stabilizer" evidence="1">
    <location>
        <position position="17"/>
    </location>
</feature>
<evidence type="ECO:0000255" key="1">
    <source>
        <dbReference type="HAMAP-Rule" id="MF_00151"/>
    </source>
</evidence>
<name>COAD_PSEPG</name>
<dbReference type="EC" id="2.7.7.3" evidence="1"/>
<dbReference type="EMBL" id="CP000926">
    <property type="protein sequence ID" value="ABZ01058.1"/>
    <property type="molecule type" value="Genomic_DNA"/>
</dbReference>
<dbReference type="RefSeq" id="WP_012274672.1">
    <property type="nucleotide sequence ID" value="NC_010322.1"/>
</dbReference>
<dbReference type="SMR" id="B0KN77"/>
<dbReference type="KEGG" id="ppg:PputGB1_5173"/>
<dbReference type="eggNOG" id="COG0669">
    <property type="taxonomic scope" value="Bacteria"/>
</dbReference>
<dbReference type="HOGENOM" id="CLU_100149_0_1_6"/>
<dbReference type="UniPathway" id="UPA00241">
    <property type="reaction ID" value="UER00355"/>
</dbReference>
<dbReference type="Proteomes" id="UP000002157">
    <property type="component" value="Chromosome"/>
</dbReference>
<dbReference type="GO" id="GO:0005737">
    <property type="term" value="C:cytoplasm"/>
    <property type="evidence" value="ECO:0007669"/>
    <property type="project" value="UniProtKB-SubCell"/>
</dbReference>
<dbReference type="GO" id="GO:0005524">
    <property type="term" value="F:ATP binding"/>
    <property type="evidence" value="ECO:0007669"/>
    <property type="project" value="UniProtKB-KW"/>
</dbReference>
<dbReference type="GO" id="GO:0004595">
    <property type="term" value="F:pantetheine-phosphate adenylyltransferase activity"/>
    <property type="evidence" value="ECO:0007669"/>
    <property type="project" value="UniProtKB-UniRule"/>
</dbReference>
<dbReference type="GO" id="GO:0015937">
    <property type="term" value="P:coenzyme A biosynthetic process"/>
    <property type="evidence" value="ECO:0007669"/>
    <property type="project" value="UniProtKB-UniRule"/>
</dbReference>
<dbReference type="CDD" id="cd02163">
    <property type="entry name" value="PPAT"/>
    <property type="match status" value="1"/>
</dbReference>
<dbReference type="Gene3D" id="3.40.50.620">
    <property type="entry name" value="HUPs"/>
    <property type="match status" value="1"/>
</dbReference>
<dbReference type="HAMAP" id="MF_00151">
    <property type="entry name" value="PPAT_bact"/>
    <property type="match status" value="1"/>
</dbReference>
<dbReference type="InterPro" id="IPR004821">
    <property type="entry name" value="Cyt_trans-like"/>
</dbReference>
<dbReference type="InterPro" id="IPR001980">
    <property type="entry name" value="PPAT"/>
</dbReference>
<dbReference type="InterPro" id="IPR014729">
    <property type="entry name" value="Rossmann-like_a/b/a_fold"/>
</dbReference>
<dbReference type="NCBIfam" id="TIGR01510">
    <property type="entry name" value="coaD_prev_kdtB"/>
    <property type="match status" value="1"/>
</dbReference>
<dbReference type="NCBIfam" id="TIGR00125">
    <property type="entry name" value="cyt_tran_rel"/>
    <property type="match status" value="1"/>
</dbReference>
<dbReference type="PANTHER" id="PTHR21342">
    <property type="entry name" value="PHOSPHOPANTETHEINE ADENYLYLTRANSFERASE"/>
    <property type="match status" value="1"/>
</dbReference>
<dbReference type="PANTHER" id="PTHR21342:SF1">
    <property type="entry name" value="PHOSPHOPANTETHEINE ADENYLYLTRANSFERASE"/>
    <property type="match status" value="1"/>
</dbReference>
<dbReference type="Pfam" id="PF01467">
    <property type="entry name" value="CTP_transf_like"/>
    <property type="match status" value="1"/>
</dbReference>
<dbReference type="PRINTS" id="PR01020">
    <property type="entry name" value="LPSBIOSNTHSS"/>
</dbReference>
<dbReference type="SUPFAM" id="SSF52374">
    <property type="entry name" value="Nucleotidylyl transferase"/>
    <property type="match status" value="1"/>
</dbReference>
<gene>
    <name evidence="1" type="primary">coaD</name>
    <name type="ordered locus">PputGB1_5173</name>
</gene>
<proteinExistence type="inferred from homology"/>
<accession>B0KN77</accession>